<accession>A1KGK7</accession>
<feature type="chain" id="PRO_0000361150" description="Putative S-adenosyl-L-methionine-dependent methyltransferase BCG_0776c">
    <location>
        <begin position="1"/>
        <end position="367"/>
    </location>
</feature>
<feature type="region of interest" description="Disordered" evidence="2">
    <location>
        <begin position="348"/>
        <end position="367"/>
    </location>
</feature>
<feature type="compositionally biased region" description="Polar residues" evidence="2">
    <location>
        <begin position="348"/>
        <end position="358"/>
    </location>
</feature>
<feature type="binding site" evidence="1">
    <location>
        <position position="137"/>
    </location>
    <ligand>
        <name>S-adenosyl-L-methionine</name>
        <dbReference type="ChEBI" id="CHEBI:59789"/>
    </ligand>
</feature>
<feature type="binding site" evidence="1">
    <location>
        <begin position="166"/>
        <end position="167"/>
    </location>
    <ligand>
        <name>S-adenosyl-L-methionine</name>
        <dbReference type="ChEBI" id="CHEBI:59789"/>
    </ligand>
</feature>
<protein>
    <recommendedName>
        <fullName>Putative S-adenosyl-L-methionine-dependent methyltransferase BCG_0776c</fullName>
        <ecNumber>2.1.1.-</ecNumber>
    </recommendedName>
</protein>
<gene>
    <name type="ordered locus">BCG_0776c</name>
</gene>
<sequence length="367" mass="40876">MTYTGSIRCEGDTWDLASSVGATATMVAAARAMATRAANPLINDQFAEPLVRAVGVDVLTRLASGELTASDIDDPERPNASMVRMAEHHAVRTKFFDEFFMDATRAGIRQVVILASGLDSRAYRLAWPAQTVVYEIDQPQVMEFKTRTLAELGATPTADRRVVTADLRADWPTALGAAGFDPTQPTAWSAEGLLRYLPPEAQDRLLDNVTALSVPDSRFATESIRNFKPHHEERMRERMTILANRWRAYGFDLDMNELVYFGDRNEPASYLSDNGWLLTEIKSQDLLTANGFQPFEDEEVPLPDFFYVSARLQRKHRQYPAHRKPAPSWRHTACPVNELSKSAAYTMTRSDAHQASTTAPPPPGLTG</sequence>
<comment type="function">
    <text evidence="1">Exhibits S-adenosyl-L-methionine-dependent methyltransferase activity.</text>
</comment>
<comment type="similarity">
    <text evidence="3">Belongs to the UPF0677 family.</text>
</comment>
<keyword id="KW-0489">Methyltransferase</keyword>
<keyword id="KW-0949">S-adenosyl-L-methionine</keyword>
<keyword id="KW-0808">Transferase</keyword>
<name>Y776_MYCBP</name>
<dbReference type="EC" id="2.1.1.-"/>
<dbReference type="EMBL" id="AM408590">
    <property type="protein sequence ID" value="CAL70762.1"/>
    <property type="molecule type" value="Genomic_DNA"/>
</dbReference>
<dbReference type="RefSeq" id="WP_003403691.1">
    <property type="nucleotide sequence ID" value="NC_008769.1"/>
</dbReference>
<dbReference type="SMR" id="A1KGK7"/>
<dbReference type="KEGG" id="mbb:BCG_0776c"/>
<dbReference type="HOGENOM" id="CLU_056160_2_1_11"/>
<dbReference type="Proteomes" id="UP000001472">
    <property type="component" value="Chromosome"/>
</dbReference>
<dbReference type="GO" id="GO:0008168">
    <property type="term" value="F:methyltransferase activity"/>
    <property type="evidence" value="ECO:0007669"/>
    <property type="project" value="UniProtKB-KW"/>
</dbReference>
<dbReference type="GO" id="GO:0032259">
    <property type="term" value="P:methylation"/>
    <property type="evidence" value="ECO:0007669"/>
    <property type="project" value="UniProtKB-KW"/>
</dbReference>
<dbReference type="FunFam" id="3.40.50.150:FF:000152">
    <property type="entry name" value="S-adenosyl-L-methionine-dependent methyltransferase"/>
    <property type="match status" value="1"/>
</dbReference>
<dbReference type="Gene3D" id="3.40.50.150">
    <property type="entry name" value="Vaccinia Virus protein VP39"/>
    <property type="match status" value="1"/>
</dbReference>
<dbReference type="InterPro" id="IPR007213">
    <property type="entry name" value="Ppm1/Ppm2/Tcmp"/>
</dbReference>
<dbReference type="InterPro" id="IPR029063">
    <property type="entry name" value="SAM-dependent_MTases_sf"/>
</dbReference>
<dbReference type="InterPro" id="IPR011610">
    <property type="entry name" value="SAM_mthyl_Trfase_ML2640-like"/>
</dbReference>
<dbReference type="NCBIfam" id="TIGR00027">
    <property type="entry name" value="mthyl_TIGR00027"/>
    <property type="match status" value="1"/>
</dbReference>
<dbReference type="PANTHER" id="PTHR43619">
    <property type="entry name" value="S-ADENOSYL-L-METHIONINE-DEPENDENT METHYLTRANSFERASE YKTD-RELATED"/>
    <property type="match status" value="1"/>
</dbReference>
<dbReference type="PANTHER" id="PTHR43619:SF2">
    <property type="entry name" value="S-ADENOSYL-L-METHIONINE-DEPENDENT METHYLTRANSFERASES SUPERFAMILY PROTEIN"/>
    <property type="match status" value="1"/>
</dbReference>
<dbReference type="Pfam" id="PF04072">
    <property type="entry name" value="LCM"/>
    <property type="match status" value="1"/>
</dbReference>
<dbReference type="SUPFAM" id="SSF53335">
    <property type="entry name" value="S-adenosyl-L-methionine-dependent methyltransferases"/>
    <property type="match status" value="1"/>
</dbReference>
<evidence type="ECO:0000250" key="1"/>
<evidence type="ECO:0000256" key="2">
    <source>
        <dbReference type="SAM" id="MobiDB-lite"/>
    </source>
</evidence>
<evidence type="ECO:0000305" key="3"/>
<organism>
    <name type="scientific">Mycobacterium bovis (strain BCG / Pasteur 1173P2)</name>
    <dbReference type="NCBI Taxonomy" id="410289"/>
    <lineage>
        <taxon>Bacteria</taxon>
        <taxon>Bacillati</taxon>
        <taxon>Actinomycetota</taxon>
        <taxon>Actinomycetes</taxon>
        <taxon>Mycobacteriales</taxon>
        <taxon>Mycobacteriaceae</taxon>
        <taxon>Mycobacterium</taxon>
        <taxon>Mycobacterium tuberculosis complex</taxon>
    </lineage>
</organism>
<proteinExistence type="inferred from homology"/>
<reference key="1">
    <citation type="journal article" date="2007" name="Proc. Natl. Acad. Sci. U.S.A.">
        <title>Genome plasticity of BCG and impact on vaccine efficacy.</title>
        <authorList>
            <person name="Brosch R."/>
            <person name="Gordon S.V."/>
            <person name="Garnier T."/>
            <person name="Eiglmeier K."/>
            <person name="Frigui W."/>
            <person name="Valenti P."/>
            <person name="Dos Santos S."/>
            <person name="Duthoy S."/>
            <person name="Lacroix C."/>
            <person name="Garcia-Pelayo C."/>
            <person name="Inwald J.K."/>
            <person name="Golby P."/>
            <person name="Garcia J.N."/>
            <person name="Hewinson R.G."/>
            <person name="Behr M.A."/>
            <person name="Quail M.A."/>
            <person name="Churcher C."/>
            <person name="Barrell B.G."/>
            <person name="Parkhill J."/>
            <person name="Cole S.T."/>
        </authorList>
    </citation>
    <scope>NUCLEOTIDE SEQUENCE [LARGE SCALE GENOMIC DNA]</scope>
    <source>
        <strain>BCG / Pasteur 1173P2</strain>
    </source>
</reference>